<accession>Q1QH78</accession>
<proteinExistence type="inferred from homology"/>
<organism>
    <name type="scientific">Nitrobacter hamburgensis (strain DSM 10229 / NCIMB 13809 / X14)</name>
    <dbReference type="NCBI Taxonomy" id="323097"/>
    <lineage>
        <taxon>Bacteria</taxon>
        <taxon>Pseudomonadati</taxon>
        <taxon>Pseudomonadota</taxon>
        <taxon>Alphaproteobacteria</taxon>
        <taxon>Hyphomicrobiales</taxon>
        <taxon>Nitrobacteraceae</taxon>
        <taxon>Nitrobacter</taxon>
    </lineage>
</organism>
<keyword id="KW-0378">Hydrolase</keyword>
<keyword id="KW-0408">Iron</keyword>
<keyword id="KW-0479">Metal-binding</keyword>
<keyword id="KW-0648">Protein biosynthesis</keyword>
<keyword id="KW-1185">Reference proteome</keyword>
<evidence type="ECO:0000255" key="1">
    <source>
        <dbReference type="HAMAP-Rule" id="MF_00163"/>
    </source>
</evidence>
<reference key="1">
    <citation type="submission" date="2006-03" db="EMBL/GenBank/DDBJ databases">
        <title>Complete sequence of chromosome of Nitrobacter hamburgensis X14.</title>
        <authorList>
            <consortium name="US DOE Joint Genome Institute"/>
            <person name="Copeland A."/>
            <person name="Lucas S."/>
            <person name="Lapidus A."/>
            <person name="Barry K."/>
            <person name="Detter J.C."/>
            <person name="Glavina del Rio T."/>
            <person name="Hammon N."/>
            <person name="Israni S."/>
            <person name="Dalin E."/>
            <person name="Tice H."/>
            <person name="Pitluck S."/>
            <person name="Chain P."/>
            <person name="Malfatti S."/>
            <person name="Shin M."/>
            <person name="Vergez L."/>
            <person name="Schmutz J."/>
            <person name="Larimer F."/>
            <person name="Land M."/>
            <person name="Hauser L."/>
            <person name="Kyrpides N."/>
            <person name="Ivanova N."/>
            <person name="Ward B."/>
            <person name="Arp D."/>
            <person name="Klotz M."/>
            <person name="Stein L."/>
            <person name="O'Mullan G."/>
            <person name="Starkenburg S."/>
            <person name="Sayavedra L."/>
            <person name="Poret-Peterson A.T."/>
            <person name="Gentry M.E."/>
            <person name="Bruce D."/>
            <person name="Richardson P."/>
        </authorList>
    </citation>
    <scope>NUCLEOTIDE SEQUENCE [LARGE SCALE GENOMIC DNA]</scope>
    <source>
        <strain>DSM 10229 / NCIMB 13809 / X14</strain>
    </source>
</reference>
<comment type="function">
    <text evidence="1">Removes the formyl group from the N-terminal Met of newly synthesized proteins. Requires at least a dipeptide for an efficient rate of reaction. N-terminal L-methionine is a prerequisite for activity but the enzyme has broad specificity at other positions.</text>
</comment>
<comment type="catalytic activity">
    <reaction evidence="1">
        <text>N-terminal N-formyl-L-methionyl-[peptide] + H2O = N-terminal L-methionyl-[peptide] + formate</text>
        <dbReference type="Rhea" id="RHEA:24420"/>
        <dbReference type="Rhea" id="RHEA-COMP:10639"/>
        <dbReference type="Rhea" id="RHEA-COMP:10640"/>
        <dbReference type="ChEBI" id="CHEBI:15377"/>
        <dbReference type="ChEBI" id="CHEBI:15740"/>
        <dbReference type="ChEBI" id="CHEBI:49298"/>
        <dbReference type="ChEBI" id="CHEBI:64731"/>
        <dbReference type="EC" id="3.5.1.88"/>
    </reaction>
</comment>
<comment type="cofactor">
    <cofactor evidence="1">
        <name>Fe(2+)</name>
        <dbReference type="ChEBI" id="CHEBI:29033"/>
    </cofactor>
    <text evidence="1">Binds 1 Fe(2+) ion.</text>
</comment>
<comment type="similarity">
    <text evidence="1">Belongs to the polypeptide deformylase family.</text>
</comment>
<sequence>MAIREIIILPDKQLRLVSRPIETVTPEIRKLADDMFETMYDAPGIGLAGIQIAQPLRIITMDLARRDEEGELTPRPRIFINPEILSASEELSTYEEGCLSIPEYYEEVERPARVRVRFTDLDGKVHEEDAEGIYATCIQHEIDHLNGVLFVDHISKLKRDRVVKKFTKAAKLAAK</sequence>
<dbReference type="EC" id="3.5.1.88" evidence="1"/>
<dbReference type="EMBL" id="CP000319">
    <property type="protein sequence ID" value="ABE64419.1"/>
    <property type="molecule type" value="Genomic_DNA"/>
</dbReference>
<dbReference type="RefSeq" id="WP_011512058.1">
    <property type="nucleotide sequence ID" value="NC_007964.1"/>
</dbReference>
<dbReference type="SMR" id="Q1QH78"/>
<dbReference type="STRING" id="323097.Nham_3693"/>
<dbReference type="KEGG" id="nha:Nham_3693"/>
<dbReference type="eggNOG" id="COG0242">
    <property type="taxonomic scope" value="Bacteria"/>
</dbReference>
<dbReference type="HOGENOM" id="CLU_061901_2_0_5"/>
<dbReference type="OrthoDB" id="9804313at2"/>
<dbReference type="Proteomes" id="UP000001953">
    <property type="component" value="Chromosome"/>
</dbReference>
<dbReference type="GO" id="GO:0046872">
    <property type="term" value="F:metal ion binding"/>
    <property type="evidence" value="ECO:0007669"/>
    <property type="project" value="UniProtKB-KW"/>
</dbReference>
<dbReference type="GO" id="GO:0042586">
    <property type="term" value="F:peptide deformylase activity"/>
    <property type="evidence" value="ECO:0007669"/>
    <property type="project" value="UniProtKB-UniRule"/>
</dbReference>
<dbReference type="GO" id="GO:0043686">
    <property type="term" value="P:co-translational protein modification"/>
    <property type="evidence" value="ECO:0007669"/>
    <property type="project" value="TreeGrafter"/>
</dbReference>
<dbReference type="GO" id="GO:0006412">
    <property type="term" value="P:translation"/>
    <property type="evidence" value="ECO:0007669"/>
    <property type="project" value="UniProtKB-UniRule"/>
</dbReference>
<dbReference type="CDD" id="cd00487">
    <property type="entry name" value="Pep_deformylase"/>
    <property type="match status" value="1"/>
</dbReference>
<dbReference type="Gene3D" id="3.90.45.10">
    <property type="entry name" value="Peptide deformylase"/>
    <property type="match status" value="1"/>
</dbReference>
<dbReference type="HAMAP" id="MF_00163">
    <property type="entry name" value="Pep_deformylase"/>
    <property type="match status" value="1"/>
</dbReference>
<dbReference type="InterPro" id="IPR023635">
    <property type="entry name" value="Peptide_deformylase"/>
</dbReference>
<dbReference type="InterPro" id="IPR036821">
    <property type="entry name" value="Peptide_deformylase_sf"/>
</dbReference>
<dbReference type="NCBIfam" id="TIGR00079">
    <property type="entry name" value="pept_deformyl"/>
    <property type="match status" value="1"/>
</dbReference>
<dbReference type="NCBIfam" id="NF001159">
    <property type="entry name" value="PRK00150.1-3"/>
    <property type="match status" value="1"/>
</dbReference>
<dbReference type="PANTHER" id="PTHR10458">
    <property type="entry name" value="PEPTIDE DEFORMYLASE"/>
    <property type="match status" value="1"/>
</dbReference>
<dbReference type="PANTHER" id="PTHR10458:SF22">
    <property type="entry name" value="PEPTIDE DEFORMYLASE"/>
    <property type="match status" value="1"/>
</dbReference>
<dbReference type="Pfam" id="PF01327">
    <property type="entry name" value="Pep_deformylase"/>
    <property type="match status" value="1"/>
</dbReference>
<dbReference type="PIRSF" id="PIRSF004749">
    <property type="entry name" value="Pep_def"/>
    <property type="match status" value="1"/>
</dbReference>
<dbReference type="PRINTS" id="PR01576">
    <property type="entry name" value="PDEFORMYLASE"/>
</dbReference>
<dbReference type="SUPFAM" id="SSF56420">
    <property type="entry name" value="Peptide deformylase"/>
    <property type="match status" value="1"/>
</dbReference>
<feature type="chain" id="PRO_0000301069" description="Peptide deformylase">
    <location>
        <begin position="1"/>
        <end position="175"/>
    </location>
</feature>
<feature type="active site" evidence="1">
    <location>
        <position position="141"/>
    </location>
</feature>
<feature type="binding site" evidence="1">
    <location>
        <position position="98"/>
    </location>
    <ligand>
        <name>Fe cation</name>
        <dbReference type="ChEBI" id="CHEBI:24875"/>
    </ligand>
</feature>
<feature type="binding site" evidence="1">
    <location>
        <position position="140"/>
    </location>
    <ligand>
        <name>Fe cation</name>
        <dbReference type="ChEBI" id="CHEBI:24875"/>
    </ligand>
</feature>
<feature type="binding site" evidence="1">
    <location>
        <position position="144"/>
    </location>
    <ligand>
        <name>Fe cation</name>
        <dbReference type="ChEBI" id="CHEBI:24875"/>
    </ligand>
</feature>
<gene>
    <name evidence="1" type="primary">def</name>
    <name type="ordered locus">Nham_3693</name>
</gene>
<protein>
    <recommendedName>
        <fullName evidence="1">Peptide deformylase</fullName>
        <shortName evidence="1">PDF</shortName>
        <ecNumber evidence="1">3.5.1.88</ecNumber>
    </recommendedName>
    <alternativeName>
        <fullName evidence="1">Polypeptide deformylase</fullName>
    </alternativeName>
</protein>
<name>DEF_NITHX</name>